<evidence type="ECO:0000256" key="1">
    <source>
        <dbReference type="SAM" id="MobiDB-lite"/>
    </source>
</evidence>
<evidence type="ECO:0000269" key="2">
    <source>
    </source>
</evidence>
<evidence type="ECO:0000269" key="3">
    <source>
    </source>
</evidence>
<protein>
    <recommendedName>
        <fullName>Small, acid-soluble spore protein M</fullName>
        <shortName>SASP M</shortName>
    </recommendedName>
</protein>
<feature type="chain" id="PRO_0000072225" description="Small, acid-soluble spore protein M">
    <location>
        <begin position="1"/>
        <end position="34"/>
    </location>
</feature>
<feature type="region of interest" description="Disordered" evidence="1">
    <location>
        <begin position="1"/>
        <end position="34"/>
    </location>
</feature>
<feature type="compositionally biased region" description="Basic residues" evidence="1">
    <location>
        <begin position="1"/>
        <end position="10"/>
    </location>
</feature>
<feature type="compositionally biased region" description="Basic and acidic residues" evidence="1">
    <location>
        <begin position="12"/>
        <end position="26"/>
    </location>
</feature>
<proteinExistence type="evidence at protein level"/>
<accession>Q7WY65</accession>
<sequence length="34" mass="3725">MKTRPKKAGQQKKTESKAIDSLDKKLGGPNRPST</sequence>
<gene>
    <name type="primary">sspM</name>
    <name type="ordered locus">BSU22290</name>
</gene>
<keyword id="KW-0903">Direct protein sequencing</keyword>
<keyword id="KW-1185">Reference proteome</keyword>
<keyword id="KW-0749">Sporulation</keyword>
<organism>
    <name type="scientific">Bacillus subtilis (strain 168)</name>
    <dbReference type="NCBI Taxonomy" id="224308"/>
    <lineage>
        <taxon>Bacteria</taxon>
        <taxon>Bacillati</taxon>
        <taxon>Bacillota</taxon>
        <taxon>Bacilli</taxon>
        <taxon>Bacillales</taxon>
        <taxon>Bacillaceae</taxon>
        <taxon>Bacillus</taxon>
    </lineage>
</organism>
<reference key="1">
    <citation type="journal article" date="1997" name="Nature">
        <title>The complete genome sequence of the Gram-positive bacterium Bacillus subtilis.</title>
        <authorList>
            <person name="Kunst F."/>
            <person name="Ogasawara N."/>
            <person name="Moszer I."/>
            <person name="Albertini A.M."/>
            <person name="Alloni G."/>
            <person name="Azevedo V."/>
            <person name="Bertero M.G."/>
            <person name="Bessieres P."/>
            <person name="Bolotin A."/>
            <person name="Borchert S."/>
            <person name="Borriss R."/>
            <person name="Boursier L."/>
            <person name="Brans A."/>
            <person name="Braun M."/>
            <person name="Brignell S.C."/>
            <person name="Bron S."/>
            <person name="Brouillet S."/>
            <person name="Bruschi C.V."/>
            <person name="Caldwell B."/>
            <person name="Capuano V."/>
            <person name="Carter N.M."/>
            <person name="Choi S.-K."/>
            <person name="Codani J.-J."/>
            <person name="Connerton I.F."/>
            <person name="Cummings N.J."/>
            <person name="Daniel R.A."/>
            <person name="Denizot F."/>
            <person name="Devine K.M."/>
            <person name="Duesterhoeft A."/>
            <person name="Ehrlich S.D."/>
            <person name="Emmerson P.T."/>
            <person name="Entian K.-D."/>
            <person name="Errington J."/>
            <person name="Fabret C."/>
            <person name="Ferrari E."/>
            <person name="Foulger D."/>
            <person name="Fritz C."/>
            <person name="Fujita M."/>
            <person name="Fujita Y."/>
            <person name="Fuma S."/>
            <person name="Galizzi A."/>
            <person name="Galleron N."/>
            <person name="Ghim S.-Y."/>
            <person name="Glaser P."/>
            <person name="Goffeau A."/>
            <person name="Golightly E.J."/>
            <person name="Grandi G."/>
            <person name="Guiseppi G."/>
            <person name="Guy B.J."/>
            <person name="Haga K."/>
            <person name="Haiech J."/>
            <person name="Harwood C.R."/>
            <person name="Henaut A."/>
            <person name="Hilbert H."/>
            <person name="Holsappel S."/>
            <person name="Hosono S."/>
            <person name="Hullo M.-F."/>
            <person name="Itaya M."/>
            <person name="Jones L.-M."/>
            <person name="Joris B."/>
            <person name="Karamata D."/>
            <person name="Kasahara Y."/>
            <person name="Klaerr-Blanchard M."/>
            <person name="Klein C."/>
            <person name="Kobayashi Y."/>
            <person name="Koetter P."/>
            <person name="Koningstein G."/>
            <person name="Krogh S."/>
            <person name="Kumano M."/>
            <person name="Kurita K."/>
            <person name="Lapidus A."/>
            <person name="Lardinois S."/>
            <person name="Lauber J."/>
            <person name="Lazarevic V."/>
            <person name="Lee S.-M."/>
            <person name="Levine A."/>
            <person name="Liu H."/>
            <person name="Masuda S."/>
            <person name="Mauel C."/>
            <person name="Medigue C."/>
            <person name="Medina N."/>
            <person name="Mellado R.P."/>
            <person name="Mizuno M."/>
            <person name="Moestl D."/>
            <person name="Nakai S."/>
            <person name="Noback M."/>
            <person name="Noone D."/>
            <person name="O'Reilly M."/>
            <person name="Ogawa K."/>
            <person name="Ogiwara A."/>
            <person name="Oudega B."/>
            <person name="Park S.-H."/>
            <person name="Parro V."/>
            <person name="Pohl T.M."/>
            <person name="Portetelle D."/>
            <person name="Porwollik S."/>
            <person name="Prescott A.M."/>
            <person name="Presecan E."/>
            <person name="Pujic P."/>
            <person name="Purnelle B."/>
            <person name="Rapoport G."/>
            <person name="Rey M."/>
            <person name="Reynolds S."/>
            <person name="Rieger M."/>
            <person name="Rivolta C."/>
            <person name="Rocha E."/>
            <person name="Roche B."/>
            <person name="Rose M."/>
            <person name="Sadaie Y."/>
            <person name="Sato T."/>
            <person name="Scanlan E."/>
            <person name="Schleich S."/>
            <person name="Schroeter R."/>
            <person name="Scoffone F."/>
            <person name="Sekiguchi J."/>
            <person name="Sekowska A."/>
            <person name="Seror S.J."/>
            <person name="Serror P."/>
            <person name="Shin B.-S."/>
            <person name="Soldo B."/>
            <person name="Sorokin A."/>
            <person name="Tacconi E."/>
            <person name="Takagi T."/>
            <person name="Takahashi H."/>
            <person name="Takemaru K."/>
            <person name="Takeuchi M."/>
            <person name="Tamakoshi A."/>
            <person name="Tanaka T."/>
            <person name="Terpstra P."/>
            <person name="Tognoni A."/>
            <person name="Tosato V."/>
            <person name="Uchiyama S."/>
            <person name="Vandenbol M."/>
            <person name="Vannier F."/>
            <person name="Vassarotti A."/>
            <person name="Viari A."/>
            <person name="Wambutt R."/>
            <person name="Wedler E."/>
            <person name="Wedler H."/>
            <person name="Weitzenegger T."/>
            <person name="Winters P."/>
            <person name="Wipat A."/>
            <person name="Yamamoto H."/>
            <person name="Yamane K."/>
            <person name="Yasumoto K."/>
            <person name="Yata K."/>
            <person name="Yoshida K."/>
            <person name="Yoshikawa H.-F."/>
            <person name="Zumstein E."/>
            <person name="Yoshikawa H."/>
            <person name="Danchin A."/>
        </authorList>
    </citation>
    <scope>NUCLEOTIDE SEQUENCE [LARGE SCALE GENOMIC DNA]</scope>
    <source>
        <strain>168</strain>
    </source>
</reference>
<reference key="2">
    <citation type="journal article" date="1998" name="J. Bacteriol.">
        <title>New small, acid-soluble proteins unique to spores of Bacillus subtilis: identification of the coding genes and regulation and function of two of these genes.</title>
        <authorList>
            <person name="Bagyan I."/>
            <person name="Setlow B."/>
            <person name="Setlow P."/>
        </authorList>
    </citation>
    <scope>PROTEIN SEQUENCE OF 1-12</scope>
    <scope>SUBCELLULAR LOCATION</scope>
</reference>
<reference key="3">
    <citation type="journal article" date="2000" name="Gene">
        <title>Analysis of the regulation and function of five genes encoding small, acid-soluble spore proteins of Bacillus subtilis.</title>
        <authorList>
            <person name="Cabrera-Hernandez A."/>
            <person name="Setlow P."/>
        </authorList>
    </citation>
    <scope>SUBCELLULAR LOCATION</scope>
    <scope>DEVELOPMENTAL STAGE</scope>
    <scope>REGULATION OF EXPRESSION</scope>
</reference>
<comment type="subcellular location">
    <subcellularLocation>
        <location evidence="2 3">Spore core</location>
    </subcellularLocation>
</comment>
<comment type="developmental stage">
    <text evidence="2">Expressed only in the forespore compartment of sporulating cells. Disappears after 45 minutes of spore germination.</text>
</comment>
<comment type="induction">
    <text>Expression is sigma G-dependent.</text>
</comment>
<dbReference type="EMBL" id="AL009126">
    <property type="protein sequence ID" value="CAE01459.1"/>
    <property type="molecule type" value="Genomic_DNA"/>
</dbReference>
<dbReference type="RefSeq" id="WP_003225606.1">
    <property type="nucleotide sequence ID" value="NZ_OZ025638.1"/>
</dbReference>
<dbReference type="RefSeq" id="YP_054585.1">
    <property type="nucleotide sequence ID" value="NC_000964.3"/>
</dbReference>
<dbReference type="FunCoup" id="Q7WY65">
    <property type="interactions" value="30"/>
</dbReference>
<dbReference type="STRING" id="224308.BSU22290"/>
<dbReference type="PaxDb" id="224308-BSU22290"/>
<dbReference type="EnsemblBacteria" id="CAE01459">
    <property type="protein sequence ID" value="CAE01459"/>
    <property type="gene ID" value="BSU_22290"/>
</dbReference>
<dbReference type="GeneID" id="2914288"/>
<dbReference type="GeneID" id="86873232"/>
<dbReference type="KEGG" id="bsu:BSU22290"/>
<dbReference type="PATRIC" id="fig|224308.179.peg.2433"/>
<dbReference type="InParanoid" id="Q7WY65"/>
<dbReference type="OrthoDB" id="2914652at2"/>
<dbReference type="BioCyc" id="BSUB:BSU22290-MONOMER"/>
<dbReference type="PRO" id="PR:Q7WY65"/>
<dbReference type="Proteomes" id="UP000001570">
    <property type="component" value="Chromosome"/>
</dbReference>
<dbReference type="GO" id="GO:0030435">
    <property type="term" value="P:sporulation resulting in formation of a cellular spore"/>
    <property type="evidence" value="ECO:0007669"/>
    <property type="project" value="UniProtKB-KW"/>
</dbReference>
<dbReference type="InterPro" id="IPR048194">
    <property type="entry name" value="SspM"/>
</dbReference>
<dbReference type="NCBIfam" id="NF041478">
    <property type="entry name" value="spor_prot_SspM"/>
    <property type="match status" value="1"/>
</dbReference>
<name>SSPM_BACSU</name>